<evidence type="ECO:0000255" key="1">
    <source>
        <dbReference type="HAMAP-Rule" id="MF_01713"/>
    </source>
</evidence>
<sequence length="277" mass="29705">MNIKLDKVSARHPAAKRDAAAALRGVSLEVSAGEQIAVIGPSGAGKTTLLHVLGCALPPSSGSLQLNARDPWRLPRSKLQLLRGELFLAPQVPPLPPRQRVVTSVLAGRLPHIGLWQSLRSLFYPTAIAQADAALARFDLSDKLFARVDRLSGGERQRVGLARALVTEASLLLVDEPLSALDPTRGQQAIASLTQAARERGATLVSTLHHVEMALQNFPRIIGLRDGELAFDLPAAQVTPERLQALYAQHLHELTGPAHEAFDLPAAATPPAVMHCR</sequence>
<protein>
    <recommendedName>
        <fullName evidence="1">Phosphonates import ATP-binding protein PhnC</fullName>
        <ecNumber evidence="1">7.3.2.2</ecNumber>
    </recommendedName>
</protein>
<name>PHNC_POLSJ</name>
<proteinExistence type="inferred from homology"/>
<reference key="1">
    <citation type="journal article" date="2008" name="Appl. Environ. Microbiol.">
        <title>The genome of Polaromonas sp. strain JS666: insights into the evolution of a hydrocarbon- and xenobiotic-degrading bacterium, and features of relevance to biotechnology.</title>
        <authorList>
            <person name="Mattes T.E."/>
            <person name="Alexander A.K."/>
            <person name="Richardson P.M."/>
            <person name="Munk A.C."/>
            <person name="Han C.S."/>
            <person name="Stothard P."/>
            <person name="Coleman N.V."/>
        </authorList>
    </citation>
    <scope>NUCLEOTIDE SEQUENCE [LARGE SCALE GENOMIC DNA]</scope>
    <source>
        <strain>JS666 / ATCC BAA-500</strain>
    </source>
</reference>
<dbReference type="EC" id="7.3.2.2" evidence="1"/>
<dbReference type="EMBL" id="CP000316">
    <property type="protein sequence ID" value="ABE44163.1"/>
    <property type="molecule type" value="Genomic_DNA"/>
</dbReference>
<dbReference type="RefSeq" id="WP_011483161.1">
    <property type="nucleotide sequence ID" value="NC_007948.1"/>
</dbReference>
<dbReference type="SMR" id="Q12BC9"/>
<dbReference type="STRING" id="296591.Bpro_2237"/>
<dbReference type="KEGG" id="pol:Bpro_2237"/>
<dbReference type="eggNOG" id="COG3638">
    <property type="taxonomic scope" value="Bacteria"/>
</dbReference>
<dbReference type="HOGENOM" id="CLU_000604_1_22_4"/>
<dbReference type="OrthoDB" id="9802264at2"/>
<dbReference type="Proteomes" id="UP000001983">
    <property type="component" value="Chromosome"/>
</dbReference>
<dbReference type="GO" id="GO:0005886">
    <property type="term" value="C:plasma membrane"/>
    <property type="evidence" value="ECO:0007669"/>
    <property type="project" value="UniProtKB-SubCell"/>
</dbReference>
<dbReference type="GO" id="GO:0015416">
    <property type="term" value="F:ABC-type phosphonate transporter activity"/>
    <property type="evidence" value="ECO:0007669"/>
    <property type="project" value="UniProtKB-EC"/>
</dbReference>
<dbReference type="GO" id="GO:0005524">
    <property type="term" value="F:ATP binding"/>
    <property type="evidence" value="ECO:0007669"/>
    <property type="project" value="UniProtKB-KW"/>
</dbReference>
<dbReference type="GO" id="GO:0016887">
    <property type="term" value="F:ATP hydrolysis activity"/>
    <property type="evidence" value="ECO:0007669"/>
    <property type="project" value="InterPro"/>
</dbReference>
<dbReference type="Gene3D" id="3.40.50.300">
    <property type="entry name" value="P-loop containing nucleotide triphosphate hydrolases"/>
    <property type="match status" value="1"/>
</dbReference>
<dbReference type="InterPro" id="IPR003593">
    <property type="entry name" value="AAA+_ATPase"/>
</dbReference>
<dbReference type="InterPro" id="IPR003439">
    <property type="entry name" value="ABC_transporter-like_ATP-bd"/>
</dbReference>
<dbReference type="InterPro" id="IPR017871">
    <property type="entry name" value="ABC_transporter-like_CS"/>
</dbReference>
<dbReference type="InterPro" id="IPR027417">
    <property type="entry name" value="P-loop_NTPase"/>
</dbReference>
<dbReference type="PANTHER" id="PTHR42794">
    <property type="entry name" value="HEMIN IMPORT ATP-BINDING PROTEIN HMUV"/>
    <property type="match status" value="1"/>
</dbReference>
<dbReference type="PANTHER" id="PTHR42794:SF1">
    <property type="entry name" value="HEMIN IMPORT ATP-BINDING PROTEIN HMUV"/>
    <property type="match status" value="1"/>
</dbReference>
<dbReference type="Pfam" id="PF00005">
    <property type="entry name" value="ABC_tran"/>
    <property type="match status" value="1"/>
</dbReference>
<dbReference type="SMART" id="SM00382">
    <property type="entry name" value="AAA"/>
    <property type="match status" value="1"/>
</dbReference>
<dbReference type="SUPFAM" id="SSF52540">
    <property type="entry name" value="P-loop containing nucleoside triphosphate hydrolases"/>
    <property type="match status" value="1"/>
</dbReference>
<dbReference type="PROSITE" id="PS00211">
    <property type="entry name" value="ABC_TRANSPORTER_1"/>
    <property type="match status" value="1"/>
</dbReference>
<dbReference type="PROSITE" id="PS50893">
    <property type="entry name" value="ABC_TRANSPORTER_2"/>
    <property type="match status" value="1"/>
</dbReference>
<dbReference type="PROSITE" id="PS51249">
    <property type="entry name" value="PHNC"/>
    <property type="match status" value="1"/>
</dbReference>
<gene>
    <name evidence="1" type="primary">phnC</name>
    <name type="ordered locus">Bpro_2237</name>
</gene>
<comment type="function">
    <text evidence="1">Part of the ABC transporter complex PhnCDE involved in phosphonates import. Responsible for energy coupling to the transport system.</text>
</comment>
<comment type="catalytic activity">
    <reaction evidence="1">
        <text>phosphonate(out) + ATP + H2O = phosphonate(in) + ADP + phosphate + H(+)</text>
        <dbReference type="Rhea" id="RHEA:18065"/>
        <dbReference type="ChEBI" id="CHEBI:15377"/>
        <dbReference type="ChEBI" id="CHEBI:15378"/>
        <dbReference type="ChEBI" id="CHEBI:16215"/>
        <dbReference type="ChEBI" id="CHEBI:30616"/>
        <dbReference type="ChEBI" id="CHEBI:43474"/>
        <dbReference type="ChEBI" id="CHEBI:456216"/>
        <dbReference type="EC" id="7.3.2.2"/>
    </reaction>
</comment>
<comment type="subunit">
    <text evidence="1">The complex is composed of two ATP-binding proteins (PhnC), two transmembrane proteins (PhnE) and a solute-binding protein (PhnD).</text>
</comment>
<comment type="subcellular location">
    <subcellularLocation>
        <location evidence="1">Cell inner membrane</location>
        <topology evidence="1">Peripheral membrane protein</topology>
    </subcellularLocation>
</comment>
<comment type="similarity">
    <text evidence="1">Belongs to the ABC transporter superfamily. Phosphonates importer (TC 3.A.1.9.1) family.</text>
</comment>
<feature type="chain" id="PRO_0000274723" description="Phosphonates import ATP-binding protein PhnC">
    <location>
        <begin position="1"/>
        <end position="277"/>
    </location>
</feature>
<feature type="domain" description="ABC transporter" evidence="1">
    <location>
        <begin position="3"/>
        <end position="251"/>
    </location>
</feature>
<feature type="binding site" evidence="1">
    <location>
        <begin position="40"/>
        <end position="47"/>
    </location>
    <ligand>
        <name>ATP</name>
        <dbReference type="ChEBI" id="CHEBI:30616"/>
    </ligand>
</feature>
<accession>Q12BC9</accession>
<organism>
    <name type="scientific">Polaromonas sp. (strain JS666 / ATCC BAA-500)</name>
    <dbReference type="NCBI Taxonomy" id="296591"/>
    <lineage>
        <taxon>Bacteria</taxon>
        <taxon>Pseudomonadati</taxon>
        <taxon>Pseudomonadota</taxon>
        <taxon>Betaproteobacteria</taxon>
        <taxon>Burkholderiales</taxon>
        <taxon>Comamonadaceae</taxon>
        <taxon>Polaromonas</taxon>
    </lineage>
</organism>
<keyword id="KW-0067">ATP-binding</keyword>
<keyword id="KW-0997">Cell inner membrane</keyword>
<keyword id="KW-1003">Cell membrane</keyword>
<keyword id="KW-0472">Membrane</keyword>
<keyword id="KW-0547">Nucleotide-binding</keyword>
<keyword id="KW-0918">Phosphonate transport</keyword>
<keyword id="KW-1185">Reference proteome</keyword>
<keyword id="KW-1278">Translocase</keyword>
<keyword id="KW-0813">Transport</keyword>